<keyword id="KW-0028">Amino-acid biosynthesis</keyword>
<keyword id="KW-0057">Aromatic amino acid biosynthesis</keyword>
<keyword id="KW-0274">FAD</keyword>
<keyword id="KW-0285">Flavoprotein</keyword>
<keyword id="KW-0288">FMN</keyword>
<keyword id="KW-0456">Lyase</keyword>
<keyword id="KW-0521">NADP</keyword>
<keyword id="KW-1185">Reference proteome</keyword>
<sequence length="393" mass="42832">MFRYLTAGESHGPQLTAIIEGIPAGLKLSEESINVDLARRQGGYGRGGRMAIEKDQVEILSGVRWGKTIGSPITLCVKNRDWTNWQEKMSPQERFRDDNIHVTRSRPGHADLPGAMKYDHKDVRNILERSSARETAVRVAVGSVAKALLQHFEIYLCGYVAELGGIKAKRPELCPAELRATIAKSELYTCDSAVEGEMKKLIDEVKAAGDTVGGVVEVIASGVPAGLGSHVQWDRKLDARIAMAMMSIQAFKGVEIGLGFEAAARKGSNVHDEIFYDQSRASQGSMTGYYRLTNNAGGIEGGITNGEDILVRAAMKPIPTLYKPLRSVDIVSKEPFEATVERSDVCAVPAASVVAESVLAIELADAFMVKFGGDSIEEMQRNYAGYLEYLKNF</sequence>
<organism>
    <name type="scientific">Geotalea daltonii (strain DSM 22248 / JCM 15807 / FRC-32)</name>
    <name type="common">Geobacter daltonii</name>
    <dbReference type="NCBI Taxonomy" id="316067"/>
    <lineage>
        <taxon>Bacteria</taxon>
        <taxon>Pseudomonadati</taxon>
        <taxon>Thermodesulfobacteriota</taxon>
        <taxon>Desulfuromonadia</taxon>
        <taxon>Geobacterales</taxon>
        <taxon>Geobacteraceae</taxon>
        <taxon>Geotalea</taxon>
    </lineage>
</organism>
<reference key="1">
    <citation type="submission" date="2009-01" db="EMBL/GenBank/DDBJ databases">
        <title>Complete sequence of Geobacter sp. FRC-32.</title>
        <authorList>
            <consortium name="US DOE Joint Genome Institute"/>
            <person name="Lucas S."/>
            <person name="Copeland A."/>
            <person name="Lapidus A."/>
            <person name="Glavina del Rio T."/>
            <person name="Dalin E."/>
            <person name="Tice H."/>
            <person name="Bruce D."/>
            <person name="Goodwin L."/>
            <person name="Pitluck S."/>
            <person name="Saunders E."/>
            <person name="Brettin T."/>
            <person name="Detter J.C."/>
            <person name="Han C."/>
            <person name="Larimer F."/>
            <person name="Land M."/>
            <person name="Hauser L."/>
            <person name="Kyrpides N."/>
            <person name="Ovchinnikova G."/>
            <person name="Kostka J."/>
            <person name="Richardson P."/>
        </authorList>
    </citation>
    <scope>NUCLEOTIDE SEQUENCE [LARGE SCALE GENOMIC DNA]</scope>
    <source>
        <strain>DSM 22248 / JCM 15807 / FRC-32</strain>
    </source>
</reference>
<accession>B9M3I5</accession>
<name>AROC_GEODF</name>
<proteinExistence type="inferred from homology"/>
<feature type="chain" id="PRO_1000132773" description="Chorismate synthase">
    <location>
        <begin position="1"/>
        <end position="393"/>
    </location>
</feature>
<feature type="binding site" evidence="1">
    <location>
        <position position="40"/>
    </location>
    <ligand>
        <name>NADP(+)</name>
        <dbReference type="ChEBI" id="CHEBI:58349"/>
    </ligand>
</feature>
<feature type="binding site" evidence="1">
    <location>
        <position position="46"/>
    </location>
    <ligand>
        <name>NADP(+)</name>
        <dbReference type="ChEBI" id="CHEBI:58349"/>
    </ligand>
</feature>
<feature type="binding site" evidence="1">
    <location>
        <begin position="129"/>
        <end position="131"/>
    </location>
    <ligand>
        <name>FMN</name>
        <dbReference type="ChEBI" id="CHEBI:58210"/>
    </ligand>
</feature>
<feature type="binding site" evidence="1">
    <location>
        <begin position="249"/>
        <end position="250"/>
    </location>
    <ligand>
        <name>FMN</name>
        <dbReference type="ChEBI" id="CHEBI:58210"/>
    </ligand>
</feature>
<feature type="binding site" evidence="1">
    <location>
        <position position="301"/>
    </location>
    <ligand>
        <name>FMN</name>
        <dbReference type="ChEBI" id="CHEBI:58210"/>
    </ligand>
</feature>
<feature type="binding site" evidence="1">
    <location>
        <begin position="316"/>
        <end position="320"/>
    </location>
    <ligand>
        <name>FMN</name>
        <dbReference type="ChEBI" id="CHEBI:58210"/>
    </ligand>
</feature>
<feature type="binding site" evidence="1">
    <location>
        <position position="342"/>
    </location>
    <ligand>
        <name>FMN</name>
        <dbReference type="ChEBI" id="CHEBI:58210"/>
    </ligand>
</feature>
<protein>
    <recommendedName>
        <fullName evidence="1">Chorismate synthase</fullName>
        <shortName evidence="1">CS</shortName>
        <ecNumber evidence="1">4.2.3.5</ecNumber>
    </recommendedName>
    <alternativeName>
        <fullName evidence="1">5-enolpyruvylshikimate-3-phosphate phospholyase</fullName>
    </alternativeName>
</protein>
<dbReference type="EC" id="4.2.3.5" evidence="1"/>
<dbReference type="EMBL" id="CP001390">
    <property type="protein sequence ID" value="ACM21406.1"/>
    <property type="molecule type" value="Genomic_DNA"/>
</dbReference>
<dbReference type="RefSeq" id="WP_012648134.1">
    <property type="nucleotide sequence ID" value="NC_011979.1"/>
</dbReference>
<dbReference type="SMR" id="B9M3I5"/>
<dbReference type="STRING" id="316067.Geob_3063"/>
<dbReference type="KEGG" id="geo:Geob_3063"/>
<dbReference type="eggNOG" id="COG0082">
    <property type="taxonomic scope" value="Bacteria"/>
</dbReference>
<dbReference type="HOGENOM" id="CLU_034547_2_0_7"/>
<dbReference type="OrthoDB" id="9771806at2"/>
<dbReference type="UniPathway" id="UPA00053">
    <property type="reaction ID" value="UER00090"/>
</dbReference>
<dbReference type="Proteomes" id="UP000007721">
    <property type="component" value="Chromosome"/>
</dbReference>
<dbReference type="GO" id="GO:0005829">
    <property type="term" value="C:cytosol"/>
    <property type="evidence" value="ECO:0007669"/>
    <property type="project" value="TreeGrafter"/>
</dbReference>
<dbReference type="GO" id="GO:0004107">
    <property type="term" value="F:chorismate synthase activity"/>
    <property type="evidence" value="ECO:0007669"/>
    <property type="project" value="UniProtKB-UniRule"/>
</dbReference>
<dbReference type="GO" id="GO:0010181">
    <property type="term" value="F:FMN binding"/>
    <property type="evidence" value="ECO:0007669"/>
    <property type="project" value="TreeGrafter"/>
</dbReference>
<dbReference type="GO" id="GO:0008652">
    <property type="term" value="P:amino acid biosynthetic process"/>
    <property type="evidence" value="ECO:0007669"/>
    <property type="project" value="UniProtKB-KW"/>
</dbReference>
<dbReference type="GO" id="GO:0009073">
    <property type="term" value="P:aromatic amino acid family biosynthetic process"/>
    <property type="evidence" value="ECO:0007669"/>
    <property type="project" value="UniProtKB-KW"/>
</dbReference>
<dbReference type="GO" id="GO:0009423">
    <property type="term" value="P:chorismate biosynthetic process"/>
    <property type="evidence" value="ECO:0007669"/>
    <property type="project" value="UniProtKB-UniRule"/>
</dbReference>
<dbReference type="CDD" id="cd07304">
    <property type="entry name" value="Chorismate_synthase"/>
    <property type="match status" value="1"/>
</dbReference>
<dbReference type="FunFam" id="3.60.150.10:FF:000002">
    <property type="entry name" value="Chorismate synthase"/>
    <property type="match status" value="1"/>
</dbReference>
<dbReference type="Gene3D" id="3.60.150.10">
    <property type="entry name" value="Chorismate synthase AroC"/>
    <property type="match status" value="1"/>
</dbReference>
<dbReference type="HAMAP" id="MF_00300">
    <property type="entry name" value="Chorismate_synth"/>
    <property type="match status" value="1"/>
</dbReference>
<dbReference type="InterPro" id="IPR000453">
    <property type="entry name" value="Chorismate_synth"/>
</dbReference>
<dbReference type="InterPro" id="IPR035904">
    <property type="entry name" value="Chorismate_synth_AroC_sf"/>
</dbReference>
<dbReference type="InterPro" id="IPR020541">
    <property type="entry name" value="Chorismate_synthase_CS"/>
</dbReference>
<dbReference type="NCBIfam" id="TIGR00033">
    <property type="entry name" value="aroC"/>
    <property type="match status" value="1"/>
</dbReference>
<dbReference type="NCBIfam" id="NF003793">
    <property type="entry name" value="PRK05382.1"/>
    <property type="match status" value="1"/>
</dbReference>
<dbReference type="PANTHER" id="PTHR21085">
    <property type="entry name" value="CHORISMATE SYNTHASE"/>
    <property type="match status" value="1"/>
</dbReference>
<dbReference type="PANTHER" id="PTHR21085:SF0">
    <property type="entry name" value="CHORISMATE SYNTHASE"/>
    <property type="match status" value="1"/>
</dbReference>
<dbReference type="Pfam" id="PF01264">
    <property type="entry name" value="Chorismate_synt"/>
    <property type="match status" value="1"/>
</dbReference>
<dbReference type="PIRSF" id="PIRSF001456">
    <property type="entry name" value="Chorismate_synth"/>
    <property type="match status" value="1"/>
</dbReference>
<dbReference type="SUPFAM" id="SSF103263">
    <property type="entry name" value="Chorismate synthase, AroC"/>
    <property type="match status" value="1"/>
</dbReference>
<dbReference type="PROSITE" id="PS00787">
    <property type="entry name" value="CHORISMATE_SYNTHASE_1"/>
    <property type="match status" value="1"/>
</dbReference>
<dbReference type="PROSITE" id="PS00788">
    <property type="entry name" value="CHORISMATE_SYNTHASE_2"/>
    <property type="match status" value="1"/>
</dbReference>
<dbReference type="PROSITE" id="PS00789">
    <property type="entry name" value="CHORISMATE_SYNTHASE_3"/>
    <property type="match status" value="1"/>
</dbReference>
<comment type="function">
    <text evidence="1">Catalyzes the anti-1,4-elimination of the C-3 phosphate and the C-6 proR hydrogen from 5-enolpyruvylshikimate-3-phosphate (EPSP) to yield chorismate, which is the branch point compound that serves as the starting substrate for the three terminal pathways of aromatic amino acid biosynthesis. This reaction introduces a second double bond into the aromatic ring system.</text>
</comment>
<comment type="catalytic activity">
    <reaction evidence="1">
        <text>5-O-(1-carboxyvinyl)-3-phosphoshikimate = chorismate + phosphate</text>
        <dbReference type="Rhea" id="RHEA:21020"/>
        <dbReference type="ChEBI" id="CHEBI:29748"/>
        <dbReference type="ChEBI" id="CHEBI:43474"/>
        <dbReference type="ChEBI" id="CHEBI:57701"/>
        <dbReference type="EC" id="4.2.3.5"/>
    </reaction>
</comment>
<comment type="cofactor">
    <cofactor evidence="1">
        <name>FMNH2</name>
        <dbReference type="ChEBI" id="CHEBI:57618"/>
    </cofactor>
    <text evidence="1">Reduced FMN (FMNH(2)).</text>
</comment>
<comment type="pathway">
    <text evidence="1">Metabolic intermediate biosynthesis; chorismate biosynthesis; chorismate from D-erythrose 4-phosphate and phosphoenolpyruvate: step 7/7.</text>
</comment>
<comment type="subunit">
    <text evidence="1">Homotetramer.</text>
</comment>
<comment type="similarity">
    <text evidence="1">Belongs to the chorismate synthase family.</text>
</comment>
<gene>
    <name evidence="1" type="primary">aroC</name>
    <name type="ordered locus">Geob_3063</name>
</gene>
<evidence type="ECO:0000255" key="1">
    <source>
        <dbReference type="HAMAP-Rule" id="MF_00300"/>
    </source>
</evidence>